<keyword id="KW-0119">Carbohydrate metabolism</keyword>
<keyword id="KW-0325">Glycoprotein</keyword>
<keyword id="KW-0326">Glycosidase</keyword>
<keyword id="KW-0378">Hydrolase</keyword>
<keyword id="KW-0624">Polysaccharide degradation</keyword>
<keyword id="KW-0964">Secreted</keyword>
<keyword id="KW-0732">Signal</keyword>
<keyword id="KW-0858">Xylan degradation</keyword>
<comment type="function">
    <text evidence="7 8">Endo-1,4-beta-xylanase involved in the hydrolysis of xylan, a major structural heterogeneous polysaccharide found in plant biomass representing the second most abundant polysaccharide in the biosphere, after cellulose.</text>
</comment>
<comment type="catalytic activity">
    <reaction evidence="7 8">
        <text>Endohydrolysis of (1-&gt;4)-beta-D-xylosidic linkages in xylans.</text>
        <dbReference type="EC" id="3.2.1.8"/>
    </reaction>
</comment>
<comment type="biophysicochemical properties">
    <kinetics>
        <KM evidence="7">9.96 mg/ml for birchwood xylan</KM>
    </kinetics>
    <phDependence>
        <text evidence="7">Optimum pH is 4.5.</text>
    </phDependence>
    <temperatureDependence>
        <text evidence="7">Optimum temperature is 60 degrees Celsius.</text>
    </temperatureDependence>
</comment>
<comment type="pathway">
    <text>Glycan degradation; xylan degradation.</text>
</comment>
<comment type="subcellular location">
    <subcellularLocation>
        <location evidence="7">Secreted</location>
    </subcellularLocation>
</comment>
<comment type="similarity">
    <text evidence="9">Belongs to the glycosyl hydrolase 11 (cellulase G) family.</text>
</comment>
<evidence type="ECO:0000255" key="1"/>
<evidence type="ECO:0000255" key="2">
    <source>
        <dbReference type="PROSITE-ProRule" id="PRU00597"/>
    </source>
</evidence>
<evidence type="ECO:0000255" key="3">
    <source>
        <dbReference type="PROSITE-ProRule" id="PRU01097"/>
    </source>
</evidence>
<evidence type="ECO:0000255" key="4">
    <source>
        <dbReference type="PROSITE-ProRule" id="PRU10062"/>
    </source>
</evidence>
<evidence type="ECO:0000255" key="5">
    <source>
        <dbReference type="PROSITE-ProRule" id="PRU10063"/>
    </source>
</evidence>
<evidence type="ECO:0000256" key="6">
    <source>
        <dbReference type="SAM" id="MobiDB-lite"/>
    </source>
</evidence>
<evidence type="ECO:0000269" key="7">
    <source>
    </source>
</evidence>
<evidence type="ECO:0000269" key="8">
    <source>
    </source>
</evidence>
<evidence type="ECO:0000305" key="9"/>
<dbReference type="EC" id="3.2.1.8"/>
<dbReference type="EMBL" id="EU302793">
    <property type="protein sequence ID" value="ABZ88798.1"/>
    <property type="molecule type" value="Genomic_DNA"/>
</dbReference>
<dbReference type="SMR" id="B7SIW1"/>
<dbReference type="CAZy" id="CBM1">
    <property type="family name" value="Carbohydrate-Binding Module Family 1"/>
</dbReference>
<dbReference type="CAZy" id="GH11">
    <property type="family name" value="Glycoside Hydrolase Family 11"/>
</dbReference>
<dbReference type="GlyCosmos" id="B7SIW1">
    <property type="glycosylation" value="1 site, No reported glycans"/>
</dbReference>
<dbReference type="VEuPathDB" id="FungiDB:AGR57_6406"/>
<dbReference type="UniPathway" id="UPA00114"/>
<dbReference type="GO" id="GO:0005576">
    <property type="term" value="C:extracellular region"/>
    <property type="evidence" value="ECO:0007669"/>
    <property type="project" value="UniProtKB-SubCell"/>
</dbReference>
<dbReference type="GO" id="GO:0030248">
    <property type="term" value="F:cellulose binding"/>
    <property type="evidence" value="ECO:0007669"/>
    <property type="project" value="InterPro"/>
</dbReference>
<dbReference type="GO" id="GO:0031176">
    <property type="term" value="F:endo-1,4-beta-xylanase activity"/>
    <property type="evidence" value="ECO:0007669"/>
    <property type="project" value="UniProtKB-EC"/>
</dbReference>
<dbReference type="GO" id="GO:0045493">
    <property type="term" value="P:xylan catabolic process"/>
    <property type="evidence" value="ECO:0007669"/>
    <property type="project" value="UniProtKB-UniPathway"/>
</dbReference>
<dbReference type="FunFam" id="2.60.120.180:FF:000001">
    <property type="entry name" value="Endo-1,4-beta-xylanase"/>
    <property type="match status" value="1"/>
</dbReference>
<dbReference type="Gene3D" id="2.60.120.180">
    <property type="match status" value="1"/>
</dbReference>
<dbReference type="InterPro" id="IPR035971">
    <property type="entry name" value="CBD_sf"/>
</dbReference>
<dbReference type="InterPro" id="IPR000254">
    <property type="entry name" value="Cellulose-bd_dom_fun"/>
</dbReference>
<dbReference type="InterPro" id="IPR013320">
    <property type="entry name" value="ConA-like_dom_sf"/>
</dbReference>
<dbReference type="InterPro" id="IPR013319">
    <property type="entry name" value="GH11/12"/>
</dbReference>
<dbReference type="InterPro" id="IPR018208">
    <property type="entry name" value="GH11_AS_1"/>
</dbReference>
<dbReference type="InterPro" id="IPR033119">
    <property type="entry name" value="GH11_AS_2"/>
</dbReference>
<dbReference type="InterPro" id="IPR033123">
    <property type="entry name" value="GH11_dom"/>
</dbReference>
<dbReference type="InterPro" id="IPR001137">
    <property type="entry name" value="Glyco_hydro_11"/>
</dbReference>
<dbReference type="PANTHER" id="PTHR46828">
    <property type="entry name" value="ENDO-1,4-BETA-XYLANASE A-RELATED"/>
    <property type="match status" value="1"/>
</dbReference>
<dbReference type="PANTHER" id="PTHR46828:SF2">
    <property type="entry name" value="ENDO-1,4-BETA-XYLANASE A-RELATED"/>
    <property type="match status" value="1"/>
</dbReference>
<dbReference type="Pfam" id="PF00734">
    <property type="entry name" value="CBM_1"/>
    <property type="match status" value="1"/>
</dbReference>
<dbReference type="Pfam" id="PF00457">
    <property type="entry name" value="Glyco_hydro_11"/>
    <property type="match status" value="1"/>
</dbReference>
<dbReference type="PRINTS" id="PR00911">
    <property type="entry name" value="GLHYDRLASE11"/>
</dbReference>
<dbReference type="SMART" id="SM00236">
    <property type="entry name" value="fCBD"/>
    <property type="match status" value="1"/>
</dbReference>
<dbReference type="SUPFAM" id="SSF57180">
    <property type="entry name" value="Cellulose-binding domain"/>
    <property type="match status" value="1"/>
</dbReference>
<dbReference type="SUPFAM" id="SSF49899">
    <property type="entry name" value="Concanavalin A-like lectins/glucanases"/>
    <property type="match status" value="1"/>
</dbReference>
<dbReference type="PROSITE" id="PS00562">
    <property type="entry name" value="CBM1_1"/>
    <property type="match status" value="1"/>
</dbReference>
<dbReference type="PROSITE" id="PS51164">
    <property type="entry name" value="CBM1_2"/>
    <property type="match status" value="1"/>
</dbReference>
<dbReference type="PROSITE" id="PS00776">
    <property type="entry name" value="GH11_1"/>
    <property type="match status" value="1"/>
</dbReference>
<dbReference type="PROSITE" id="PS00777">
    <property type="entry name" value="GH11_2"/>
    <property type="match status" value="1"/>
</dbReference>
<dbReference type="PROSITE" id="PS51761">
    <property type="entry name" value="GH11_3"/>
    <property type="match status" value="1"/>
</dbReference>
<proteinExistence type="evidence at protein level"/>
<sequence length="290" mass="30466">MVSFNSLLVAVSAATCALAFPFEFHNGTHVFPRQSTPAGTGTNNGYFYSFWTDGGGSVTYNNGPAGEYSVTWSNADNFVAGKGWNPGSAQAISFTANYQPNGNSYLSVYGWSTNPLVEYYILEDFGTYNPAVSLTHKGTLTSDGATYDVYEGTRVNEPSIQGTATFNQYWSIRSSKRSSGTVTTANHFAAWKQLGLPLGTFNYQIVATEGYQSSGSSTVTVNPAGGVTSPIAPTGPSSVSTTPSGPSSSPSPVGTCSALYGQCGGQGWTGPTCCSSGTCKFSNNWYSQCL</sequence>
<protein>
    <recommendedName>
        <fullName>Endo-1,4-beta-xylanase B</fullName>
        <shortName>Xylanase B</shortName>
        <ecNumber>3.2.1.8</ecNumber>
    </recommendedName>
    <alternativeName>
        <fullName>1,4-beta-D-xylan xylanohydrolase B</fullName>
    </alternativeName>
</protein>
<gene>
    <name type="primary">xynB</name>
</gene>
<accession>B7SIW1</accession>
<feature type="signal peptide" evidence="1">
    <location>
        <begin position="1"/>
        <end position="19"/>
    </location>
</feature>
<feature type="chain" id="PRO_5000419220" description="Endo-1,4-beta-xylanase B">
    <location>
        <begin position="20"/>
        <end position="290"/>
    </location>
</feature>
<feature type="domain" description="GH11" evidence="3">
    <location>
        <begin position="34"/>
        <end position="222"/>
    </location>
</feature>
<feature type="domain" description="CBM1" evidence="2">
    <location>
        <begin position="255"/>
        <end position="290"/>
    </location>
</feature>
<feature type="region of interest" description="Disordered" evidence="6">
    <location>
        <begin position="223"/>
        <end position="248"/>
    </location>
</feature>
<feature type="compositionally biased region" description="Low complexity" evidence="6">
    <location>
        <begin position="234"/>
        <end position="248"/>
    </location>
</feature>
<feature type="active site" description="Nucleophile" evidence="4">
    <location>
        <position position="118"/>
    </location>
</feature>
<feature type="active site" description="Proton donor" evidence="5">
    <location>
        <position position="209"/>
    </location>
</feature>
<feature type="glycosylation site" description="N-linked (GlcNAc...) asparagine" evidence="1">
    <location>
        <position position="26"/>
    </location>
</feature>
<name>XYNB_PHACH</name>
<organism>
    <name type="scientific">Phanerodontia chrysosporium</name>
    <name type="common">White-rot fungus</name>
    <name type="synonym">Sporotrichum pruinosum</name>
    <dbReference type="NCBI Taxonomy" id="2822231"/>
    <lineage>
        <taxon>Eukaryota</taxon>
        <taxon>Fungi</taxon>
        <taxon>Dikarya</taxon>
        <taxon>Basidiomycota</taxon>
        <taxon>Agaricomycotina</taxon>
        <taxon>Agaricomycetes</taxon>
        <taxon>Polyporales</taxon>
        <taxon>Phanerochaetaceae</taxon>
        <taxon>Phanerodontia</taxon>
    </lineage>
</organism>
<reference key="1">
    <citation type="journal article" date="2004" name="Curr. Genet.">
        <title>Cloning, functional expression and characterization of three Phanerochaete chrysosporium endo-1,4-beta-xylanases.</title>
        <authorList>
            <person name="Decelle B."/>
            <person name="Tsang A."/>
            <person name="Storms R.K."/>
        </authorList>
    </citation>
    <scope>NUCLEOTIDE SEQUENCE [GENOMIC DNA]</scope>
    <scope>SUBCELLULAR LOCATION</scope>
    <scope>IDENTIFICATION BY MASS SPECTROMETRY</scope>
    <scope>FUNCTION</scope>
    <scope>CATALYTIC ACTIVITY</scope>
    <scope>BIOPHYSICOCHEMICAL PROPERTIES</scope>
    <source>
        <strain>RP78</strain>
    </source>
</reference>
<reference key="2">
    <citation type="journal article" date="1992" name="Appl. Environ. Microbiol.">
        <title>Xylanase Activity of Phanerochaete chrysosporium.</title>
        <authorList>
            <person name="Dobozi M.S."/>
            <person name="Szakacs G."/>
            <person name="Bruschi C.V."/>
        </authorList>
    </citation>
    <scope>FUNCTION</scope>
    <scope>CATALYTIC ACTIVITY</scope>
</reference>